<organism>
    <name type="scientific">Deinococcus radiodurans (strain ATCC 13939 / DSM 20539 / JCM 16871 / CCUG 27074 / LMG 4051 / NBRC 15346 / NCIMB 9279 / VKM B-1422 / R1)</name>
    <dbReference type="NCBI Taxonomy" id="243230"/>
    <lineage>
        <taxon>Bacteria</taxon>
        <taxon>Thermotogati</taxon>
        <taxon>Deinococcota</taxon>
        <taxon>Deinococci</taxon>
        <taxon>Deinococcales</taxon>
        <taxon>Deinococcaceae</taxon>
        <taxon>Deinococcus</taxon>
    </lineage>
</organism>
<comment type="function">
    <text evidence="1">Produces ATP from ADP in the presence of a proton gradient across the membrane.</text>
</comment>
<comment type="similarity">
    <text evidence="1">Belongs to the V-ATPase E subunit family.</text>
</comment>
<name>VATE_DEIRA</name>
<proteinExistence type="inferred from homology"/>
<accession>Q9RWH1</accession>
<protein>
    <recommendedName>
        <fullName>V-type ATP synthase subunit E</fullName>
    </recommendedName>
    <alternativeName>
        <fullName evidence="1">V-ATPase subunit E</fullName>
    </alternativeName>
</protein>
<evidence type="ECO:0000255" key="1">
    <source>
        <dbReference type="HAMAP-Rule" id="MF_00311"/>
    </source>
</evidence>
<keyword id="KW-0066">ATP synthesis</keyword>
<keyword id="KW-0375">Hydrogen ion transport</keyword>
<keyword id="KW-0406">Ion transport</keyword>
<keyword id="KW-1185">Reference proteome</keyword>
<keyword id="KW-0813">Transport</keyword>
<sequence length="185" mass="20140">MALDKLLENEAQSEIERIRAEARGRAEKIVADARERAQTLLDSRQRLLENQRQAGLVRARSAADLELNAARLTASESGVTQVYQMVEDYLGNVTSAPEYGNILSRLIQEGLQAVPDAEAIEVNPAEMNVARHLVSGVEVRENPSIKGGVRVVARGGKSGVTNTLSGRLERVKADMAPQISRLLAE</sequence>
<feature type="chain" id="PRO_0000117333" description="V-type ATP synthase subunit E">
    <location>
        <begin position="1"/>
        <end position="185"/>
    </location>
</feature>
<gene>
    <name evidence="1" type="primary">atpE</name>
    <name type="ordered locus">DR_0697</name>
</gene>
<reference key="1">
    <citation type="journal article" date="1999" name="Science">
        <title>Genome sequence of the radioresistant bacterium Deinococcus radiodurans R1.</title>
        <authorList>
            <person name="White O."/>
            <person name="Eisen J.A."/>
            <person name="Heidelberg J.F."/>
            <person name="Hickey E.K."/>
            <person name="Peterson J.D."/>
            <person name="Dodson R.J."/>
            <person name="Haft D.H."/>
            <person name="Gwinn M.L."/>
            <person name="Nelson W.C."/>
            <person name="Richardson D.L."/>
            <person name="Moffat K.S."/>
            <person name="Qin H."/>
            <person name="Jiang L."/>
            <person name="Pamphile W."/>
            <person name="Crosby M."/>
            <person name="Shen M."/>
            <person name="Vamathevan J.J."/>
            <person name="Lam P."/>
            <person name="McDonald L.A."/>
            <person name="Utterback T.R."/>
            <person name="Zalewski C."/>
            <person name="Makarova K.S."/>
            <person name="Aravind L."/>
            <person name="Daly M.J."/>
            <person name="Minton K.W."/>
            <person name="Fleischmann R.D."/>
            <person name="Ketchum K.A."/>
            <person name="Nelson K.E."/>
            <person name="Salzberg S.L."/>
            <person name="Smith H.O."/>
            <person name="Venter J.C."/>
            <person name="Fraser C.M."/>
        </authorList>
    </citation>
    <scope>NUCLEOTIDE SEQUENCE [LARGE SCALE GENOMIC DNA]</scope>
    <source>
        <strain>ATCC 13939 / DSM 20539 / JCM 16871 / CCUG 27074 / LMG 4051 / NBRC 15346 / NCIMB 9279 / VKM B-1422 / R1</strain>
    </source>
</reference>
<dbReference type="EMBL" id="AE000513">
    <property type="protein sequence ID" value="AAF10275.1"/>
    <property type="molecule type" value="Genomic_DNA"/>
</dbReference>
<dbReference type="PIR" id="F75487">
    <property type="entry name" value="F75487"/>
</dbReference>
<dbReference type="RefSeq" id="NP_294420.1">
    <property type="nucleotide sequence ID" value="NC_001263.1"/>
</dbReference>
<dbReference type="RefSeq" id="WP_010887342.1">
    <property type="nucleotide sequence ID" value="NC_001263.1"/>
</dbReference>
<dbReference type="SMR" id="Q9RWH1"/>
<dbReference type="STRING" id="243230.DR_0697"/>
<dbReference type="PaxDb" id="243230-DR_0697"/>
<dbReference type="EnsemblBacteria" id="AAF10275">
    <property type="protein sequence ID" value="AAF10275"/>
    <property type="gene ID" value="DR_0697"/>
</dbReference>
<dbReference type="GeneID" id="69516944"/>
<dbReference type="KEGG" id="dra:DR_0697"/>
<dbReference type="PATRIC" id="fig|243230.17.peg.875"/>
<dbReference type="eggNOG" id="COG1390">
    <property type="taxonomic scope" value="Bacteria"/>
</dbReference>
<dbReference type="HOGENOM" id="CLU_123924_0_0_0"/>
<dbReference type="InParanoid" id="Q9RWH1"/>
<dbReference type="OrthoDB" id="68858at2"/>
<dbReference type="Proteomes" id="UP000002524">
    <property type="component" value="Chromosome 1"/>
</dbReference>
<dbReference type="GO" id="GO:0033178">
    <property type="term" value="C:proton-transporting two-sector ATPase complex, catalytic domain"/>
    <property type="evidence" value="ECO:0007669"/>
    <property type="project" value="InterPro"/>
</dbReference>
<dbReference type="GO" id="GO:0005524">
    <property type="term" value="F:ATP binding"/>
    <property type="evidence" value="ECO:0007669"/>
    <property type="project" value="UniProtKB-UniRule"/>
</dbReference>
<dbReference type="GO" id="GO:0046933">
    <property type="term" value="F:proton-transporting ATP synthase activity, rotational mechanism"/>
    <property type="evidence" value="ECO:0007669"/>
    <property type="project" value="UniProtKB-UniRule"/>
</dbReference>
<dbReference type="GO" id="GO:0046961">
    <property type="term" value="F:proton-transporting ATPase activity, rotational mechanism"/>
    <property type="evidence" value="ECO:0007669"/>
    <property type="project" value="InterPro"/>
</dbReference>
<dbReference type="GO" id="GO:0042777">
    <property type="term" value="P:proton motive force-driven plasma membrane ATP synthesis"/>
    <property type="evidence" value="ECO:0007669"/>
    <property type="project" value="UniProtKB-UniRule"/>
</dbReference>
<dbReference type="Gene3D" id="3.30.2320.30">
    <property type="entry name" value="ATP synthase, E subunit, C-terminal"/>
    <property type="match status" value="1"/>
</dbReference>
<dbReference type="Gene3D" id="1.20.5.620">
    <property type="entry name" value="F1F0 ATP synthase subunit B, membrane domain"/>
    <property type="match status" value="1"/>
</dbReference>
<dbReference type="HAMAP" id="MF_00311">
    <property type="entry name" value="ATP_synth_E_arch"/>
    <property type="match status" value="1"/>
</dbReference>
<dbReference type="InterPro" id="IPR038495">
    <property type="entry name" value="ATPase_E_C"/>
</dbReference>
<dbReference type="InterPro" id="IPR002842">
    <property type="entry name" value="ATPase_V1_Esu"/>
</dbReference>
<dbReference type="Pfam" id="PF01991">
    <property type="entry name" value="vATP-synt_E"/>
    <property type="match status" value="1"/>
</dbReference>
<dbReference type="SUPFAM" id="SSF160527">
    <property type="entry name" value="V-type ATPase subunit E-like"/>
    <property type="match status" value="1"/>
</dbReference>